<organism>
    <name type="scientific">Pseudomonas putida (strain ATCC 47054 / DSM 6125 / CFBP 8728 / NCIMB 11950 / KT2440)</name>
    <dbReference type="NCBI Taxonomy" id="160488"/>
    <lineage>
        <taxon>Bacteria</taxon>
        <taxon>Pseudomonadati</taxon>
        <taxon>Pseudomonadota</taxon>
        <taxon>Gammaproteobacteria</taxon>
        <taxon>Pseudomonadales</taxon>
        <taxon>Pseudomonadaceae</taxon>
        <taxon>Pseudomonas</taxon>
    </lineage>
</organism>
<reference key="1">
    <citation type="journal article" date="2002" name="Environ. Microbiol.">
        <title>Complete genome sequence and comparative analysis of the metabolically versatile Pseudomonas putida KT2440.</title>
        <authorList>
            <person name="Nelson K.E."/>
            <person name="Weinel C."/>
            <person name="Paulsen I.T."/>
            <person name="Dodson R.J."/>
            <person name="Hilbert H."/>
            <person name="Martins dos Santos V.A.P."/>
            <person name="Fouts D.E."/>
            <person name="Gill S.R."/>
            <person name="Pop M."/>
            <person name="Holmes M."/>
            <person name="Brinkac L.M."/>
            <person name="Beanan M.J."/>
            <person name="DeBoy R.T."/>
            <person name="Daugherty S.C."/>
            <person name="Kolonay J.F."/>
            <person name="Madupu R."/>
            <person name="Nelson W.C."/>
            <person name="White O."/>
            <person name="Peterson J.D."/>
            <person name="Khouri H.M."/>
            <person name="Hance I."/>
            <person name="Chris Lee P."/>
            <person name="Holtzapple E.K."/>
            <person name="Scanlan D."/>
            <person name="Tran K."/>
            <person name="Moazzez A."/>
            <person name="Utterback T.R."/>
            <person name="Rizzo M."/>
            <person name="Lee K."/>
            <person name="Kosack D."/>
            <person name="Moestl D."/>
            <person name="Wedler H."/>
            <person name="Lauber J."/>
            <person name="Stjepandic D."/>
            <person name="Hoheisel J."/>
            <person name="Straetz M."/>
            <person name="Heim S."/>
            <person name="Kiewitz C."/>
            <person name="Eisen J.A."/>
            <person name="Timmis K.N."/>
            <person name="Duesterhoeft A."/>
            <person name="Tuemmler B."/>
            <person name="Fraser C.M."/>
        </authorList>
    </citation>
    <scope>NUCLEOTIDE SEQUENCE [LARGE SCALE GENOMIC DNA]</scope>
    <source>
        <strain>ATCC 47054 / DSM 6125 / CFBP 8728 / NCIMB 11950 / KT2440</strain>
    </source>
</reference>
<keyword id="KW-0963">Cytoplasm</keyword>
<keyword id="KW-0570">Pentose shunt</keyword>
<keyword id="KW-1185">Reference proteome</keyword>
<keyword id="KW-0704">Schiff base</keyword>
<keyword id="KW-0808">Transferase</keyword>
<protein>
    <recommendedName>
        <fullName evidence="2">Transaldolase</fullName>
        <ecNumber evidence="2">2.2.1.2</ecNumber>
    </recommendedName>
</protein>
<sequence length="308" mass="33615">MTSKLEQLKQFTTVVADTGDLDAITRLKPVDATTNPSLLLKAAAIPGYADLLKQVKADAKGNVDLACDKFAVAVGSGILKVIPGRISTEVDARLSFDEPALLNKARQLIALYEAAGVAKERVLIKLASTWEGIRAAEQLEKEGIQTNLTLLFSFAQAQACADAGVFLISPFVGRIYDWYKKSTGQEYVGAEDPGVQSVTRIYNYYKANGYNTVVMGASFRNIGQIEQLAGCDRLTISPELLQQLSDDQGELPQVLKPGNAGEAKQHLNESQFRWAMNEDAMGTEKLAEGIRQFARDQEKLEKLIAEKA</sequence>
<feature type="chain" id="PRO_0000173608" description="Transaldolase">
    <location>
        <begin position="1"/>
        <end position="308"/>
    </location>
</feature>
<feature type="active site" description="Schiff-base intermediate with substrate" evidence="2">
    <location>
        <position position="125"/>
    </location>
</feature>
<accession>Q88KX1</accession>
<comment type="function">
    <text evidence="2">Transaldolase is important for the balance of metabolites in the pentose-phosphate pathway.</text>
</comment>
<comment type="catalytic activity">
    <reaction evidence="2">
        <text>D-sedoheptulose 7-phosphate + D-glyceraldehyde 3-phosphate = D-erythrose 4-phosphate + beta-D-fructose 6-phosphate</text>
        <dbReference type="Rhea" id="RHEA:17053"/>
        <dbReference type="ChEBI" id="CHEBI:16897"/>
        <dbReference type="ChEBI" id="CHEBI:57483"/>
        <dbReference type="ChEBI" id="CHEBI:57634"/>
        <dbReference type="ChEBI" id="CHEBI:59776"/>
        <dbReference type="EC" id="2.2.1.2"/>
    </reaction>
</comment>
<comment type="pathway">
    <text evidence="2">Carbohydrate degradation; pentose phosphate pathway; D-glyceraldehyde 3-phosphate and beta-D-fructose 6-phosphate from D-ribose 5-phosphate and D-xylulose 5-phosphate (non-oxidative stage): step 2/3.</text>
</comment>
<comment type="subunit">
    <text evidence="1">Homodimer.</text>
</comment>
<comment type="subcellular location">
    <subcellularLocation>
        <location evidence="2">Cytoplasm</location>
    </subcellularLocation>
</comment>
<comment type="similarity">
    <text evidence="2">Belongs to the transaldolase family. Type 1 subfamily.</text>
</comment>
<proteinExistence type="inferred from homology"/>
<evidence type="ECO:0000250" key="1"/>
<evidence type="ECO:0000255" key="2">
    <source>
        <dbReference type="HAMAP-Rule" id="MF_00492"/>
    </source>
</evidence>
<gene>
    <name evidence="2" type="primary">tal</name>
    <name type="ordered locus">PP_2168</name>
</gene>
<name>TAL_PSEPK</name>
<dbReference type="EC" id="2.2.1.2" evidence="2"/>
<dbReference type="EMBL" id="AE015451">
    <property type="protein sequence ID" value="AAN67781.1"/>
    <property type="molecule type" value="Genomic_DNA"/>
</dbReference>
<dbReference type="RefSeq" id="NP_744317.1">
    <property type="nucleotide sequence ID" value="NC_002947.4"/>
</dbReference>
<dbReference type="RefSeq" id="WP_010953154.1">
    <property type="nucleotide sequence ID" value="NZ_CP169744.1"/>
</dbReference>
<dbReference type="SMR" id="Q88KX1"/>
<dbReference type="STRING" id="160488.PP_2168"/>
<dbReference type="PaxDb" id="160488-PP_2168"/>
<dbReference type="GeneID" id="83681311"/>
<dbReference type="KEGG" id="ppu:PP_2168"/>
<dbReference type="PATRIC" id="fig|160488.4.peg.2285"/>
<dbReference type="eggNOG" id="COG0176">
    <property type="taxonomic scope" value="Bacteria"/>
</dbReference>
<dbReference type="HOGENOM" id="CLU_047470_0_1_6"/>
<dbReference type="OrthoDB" id="9809101at2"/>
<dbReference type="PhylomeDB" id="Q88KX1"/>
<dbReference type="BioCyc" id="PPUT160488:G1G01-2309-MONOMER"/>
<dbReference type="UniPathway" id="UPA00115">
    <property type="reaction ID" value="UER00414"/>
</dbReference>
<dbReference type="Proteomes" id="UP000000556">
    <property type="component" value="Chromosome"/>
</dbReference>
<dbReference type="GO" id="GO:0005829">
    <property type="term" value="C:cytosol"/>
    <property type="evidence" value="ECO:0007669"/>
    <property type="project" value="TreeGrafter"/>
</dbReference>
<dbReference type="GO" id="GO:0004801">
    <property type="term" value="F:transaldolase activity"/>
    <property type="evidence" value="ECO:0000250"/>
    <property type="project" value="UniProtKB"/>
</dbReference>
<dbReference type="GO" id="GO:0005975">
    <property type="term" value="P:carbohydrate metabolic process"/>
    <property type="evidence" value="ECO:0007669"/>
    <property type="project" value="InterPro"/>
</dbReference>
<dbReference type="GO" id="GO:0006098">
    <property type="term" value="P:pentose-phosphate shunt"/>
    <property type="evidence" value="ECO:0007669"/>
    <property type="project" value="UniProtKB-UniRule"/>
</dbReference>
<dbReference type="CDD" id="cd00957">
    <property type="entry name" value="Transaldolase_TalAB"/>
    <property type="match status" value="1"/>
</dbReference>
<dbReference type="FunFam" id="3.20.20.70:FF:000002">
    <property type="entry name" value="Transaldolase"/>
    <property type="match status" value="1"/>
</dbReference>
<dbReference type="Gene3D" id="3.20.20.70">
    <property type="entry name" value="Aldolase class I"/>
    <property type="match status" value="1"/>
</dbReference>
<dbReference type="HAMAP" id="MF_00492">
    <property type="entry name" value="Transaldolase_1"/>
    <property type="match status" value="1"/>
</dbReference>
<dbReference type="InterPro" id="IPR013785">
    <property type="entry name" value="Aldolase_TIM"/>
</dbReference>
<dbReference type="InterPro" id="IPR001585">
    <property type="entry name" value="TAL/FSA"/>
</dbReference>
<dbReference type="InterPro" id="IPR004730">
    <property type="entry name" value="Transaldolase_1"/>
</dbReference>
<dbReference type="InterPro" id="IPR018225">
    <property type="entry name" value="Transaldolase_AS"/>
</dbReference>
<dbReference type="NCBIfam" id="NF009001">
    <property type="entry name" value="PRK12346.1"/>
    <property type="match status" value="1"/>
</dbReference>
<dbReference type="NCBIfam" id="TIGR00874">
    <property type="entry name" value="talAB"/>
    <property type="match status" value="1"/>
</dbReference>
<dbReference type="PANTHER" id="PTHR10683">
    <property type="entry name" value="TRANSALDOLASE"/>
    <property type="match status" value="1"/>
</dbReference>
<dbReference type="PANTHER" id="PTHR10683:SF18">
    <property type="entry name" value="TRANSALDOLASE"/>
    <property type="match status" value="1"/>
</dbReference>
<dbReference type="Pfam" id="PF00923">
    <property type="entry name" value="TAL_FSA"/>
    <property type="match status" value="1"/>
</dbReference>
<dbReference type="SUPFAM" id="SSF51569">
    <property type="entry name" value="Aldolase"/>
    <property type="match status" value="1"/>
</dbReference>
<dbReference type="PROSITE" id="PS01054">
    <property type="entry name" value="TRANSALDOLASE_1"/>
    <property type="match status" value="1"/>
</dbReference>
<dbReference type="PROSITE" id="PS00958">
    <property type="entry name" value="TRANSALDOLASE_2"/>
    <property type="match status" value="1"/>
</dbReference>